<reference key="1">
    <citation type="journal article" date="2005" name="J. Bacteriol.">
        <title>Insights on evolution of virulence and resistance from the complete genome analysis of an early methicillin-resistant Staphylococcus aureus strain and a biofilm-producing methicillin-resistant Staphylococcus epidermidis strain.</title>
        <authorList>
            <person name="Gill S.R."/>
            <person name="Fouts D.E."/>
            <person name="Archer G.L."/>
            <person name="Mongodin E.F."/>
            <person name="DeBoy R.T."/>
            <person name="Ravel J."/>
            <person name="Paulsen I.T."/>
            <person name="Kolonay J.F."/>
            <person name="Brinkac L.M."/>
            <person name="Beanan M.J."/>
            <person name="Dodson R.J."/>
            <person name="Daugherty S.C."/>
            <person name="Madupu R."/>
            <person name="Angiuoli S.V."/>
            <person name="Durkin A.S."/>
            <person name="Haft D.H."/>
            <person name="Vamathevan J.J."/>
            <person name="Khouri H."/>
            <person name="Utterback T.R."/>
            <person name="Lee C."/>
            <person name="Dimitrov G."/>
            <person name="Jiang L."/>
            <person name="Qin H."/>
            <person name="Weidman J."/>
            <person name="Tran K."/>
            <person name="Kang K.H."/>
            <person name="Hance I.R."/>
            <person name="Nelson K.E."/>
            <person name="Fraser C.M."/>
        </authorList>
    </citation>
    <scope>NUCLEOTIDE SEQUENCE [LARGE SCALE GENOMIC DNA]</scope>
    <source>
        <strain>COL</strain>
    </source>
</reference>
<gene>
    <name evidence="1" type="primary">rplQ</name>
    <name type="ordered locus">SACOL2212</name>
</gene>
<comment type="subunit">
    <text evidence="1">Part of the 50S ribosomal subunit. Contacts protein L32.</text>
</comment>
<comment type="similarity">
    <text evidence="1">Belongs to the bacterial ribosomal protein bL17 family.</text>
</comment>
<name>RL17_STAAC</name>
<protein>
    <recommendedName>
        <fullName evidence="1">Large ribosomal subunit protein bL17</fullName>
    </recommendedName>
    <alternativeName>
        <fullName evidence="2">50S ribosomal protein L17</fullName>
    </alternativeName>
</protein>
<organism>
    <name type="scientific">Staphylococcus aureus (strain COL)</name>
    <dbReference type="NCBI Taxonomy" id="93062"/>
    <lineage>
        <taxon>Bacteria</taxon>
        <taxon>Bacillati</taxon>
        <taxon>Bacillota</taxon>
        <taxon>Bacilli</taxon>
        <taxon>Bacillales</taxon>
        <taxon>Staphylococcaceae</taxon>
        <taxon>Staphylococcus</taxon>
    </lineage>
</organism>
<feature type="chain" id="PRO_0000224137" description="Large ribosomal subunit protein bL17">
    <location>
        <begin position="1"/>
        <end position="122"/>
    </location>
</feature>
<sequence>MGYRKLGRTSDQRKAMLRDLATSLIISERIETTEARAKEVRSVVEKLITLGKKGDLASRRNAAKTLRNVEILNEDETTQTALQKLFGEIAERYTERQGGYTRILKQGPRRGDGAESVIIELV</sequence>
<accession>Q5HDY5</accession>
<keyword id="KW-0687">Ribonucleoprotein</keyword>
<keyword id="KW-0689">Ribosomal protein</keyword>
<dbReference type="EMBL" id="CP000046">
    <property type="protein sequence ID" value="AAW37087.1"/>
    <property type="molecule type" value="Genomic_DNA"/>
</dbReference>
<dbReference type="RefSeq" id="WP_000542274.1">
    <property type="nucleotide sequence ID" value="NZ_JBGOFO010000004.1"/>
</dbReference>
<dbReference type="SMR" id="Q5HDY5"/>
<dbReference type="GeneID" id="98346535"/>
<dbReference type="KEGG" id="sac:SACOL2212"/>
<dbReference type="HOGENOM" id="CLU_074407_2_2_9"/>
<dbReference type="Proteomes" id="UP000000530">
    <property type="component" value="Chromosome"/>
</dbReference>
<dbReference type="GO" id="GO:0022625">
    <property type="term" value="C:cytosolic large ribosomal subunit"/>
    <property type="evidence" value="ECO:0007669"/>
    <property type="project" value="TreeGrafter"/>
</dbReference>
<dbReference type="GO" id="GO:0003735">
    <property type="term" value="F:structural constituent of ribosome"/>
    <property type="evidence" value="ECO:0007669"/>
    <property type="project" value="InterPro"/>
</dbReference>
<dbReference type="GO" id="GO:0006412">
    <property type="term" value="P:translation"/>
    <property type="evidence" value="ECO:0007669"/>
    <property type="project" value="UniProtKB-UniRule"/>
</dbReference>
<dbReference type="FunFam" id="3.90.1030.10:FF:000002">
    <property type="entry name" value="50S ribosomal protein L17"/>
    <property type="match status" value="1"/>
</dbReference>
<dbReference type="Gene3D" id="3.90.1030.10">
    <property type="entry name" value="Ribosomal protein L17"/>
    <property type="match status" value="1"/>
</dbReference>
<dbReference type="HAMAP" id="MF_01368">
    <property type="entry name" value="Ribosomal_bL17"/>
    <property type="match status" value="1"/>
</dbReference>
<dbReference type="InterPro" id="IPR000456">
    <property type="entry name" value="Ribosomal_bL17"/>
</dbReference>
<dbReference type="InterPro" id="IPR047859">
    <property type="entry name" value="Ribosomal_bL17_CS"/>
</dbReference>
<dbReference type="InterPro" id="IPR036373">
    <property type="entry name" value="Ribosomal_bL17_sf"/>
</dbReference>
<dbReference type="NCBIfam" id="TIGR00059">
    <property type="entry name" value="L17"/>
    <property type="match status" value="1"/>
</dbReference>
<dbReference type="PANTHER" id="PTHR14413:SF16">
    <property type="entry name" value="LARGE RIBOSOMAL SUBUNIT PROTEIN BL17M"/>
    <property type="match status" value="1"/>
</dbReference>
<dbReference type="PANTHER" id="PTHR14413">
    <property type="entry name" value="RIBOSOMAL PROTEIN L17"/>
    <property type="match status" value="1"/>
</dbReference>
<dbReference type="Pfam" id="PF01196">
    <property type="entry name" value="Ribosomal_L17"/>
    <property type="match status" value="1"/>
</dbReference>
<dbReference type="SUPFAM" id="SSF64263">
    <property type="entry name" value="Prokaryotic ribosomal protein L17"/>
    <property type="match status" value="1"/>
</dbReference>
<dbReference type="PROSITE" id="PS01167">
    <property type="entry name" value="RIBOSOMAL_L17"/>
    <property type="match status" value="1"/>
</dbReference>
<evidence type="ECO:0000255" key="1">
    <source>
        <dbReference type="HAMAP-Rule" id="MF_01368"/>
    </source>
</evidence>
<evidence type="ECO:0000305" key="2"/>
<proteinExistence type="inferred from homology"/>